<keyword id="KW-0004">4Fe-4S</keyword>
<keyword id="KW-0997">Cell inner membrane</keyword>
<keyword id="KW-1003">Cell membrane</keyword>
<keyword id="KW-0249">Electron transport</keyword>
<keyword id="KW-0408">Iron</keyword>
<keyword id="KW-0411">Iron-sulfur</keyword>
<keyword id="KW-0472">Membrane</keyword>
<keyword id="KW-0479">Metal-binding</keyword>
<keyword id="KW-1185">Reference proteome</keyword>
<keyword id="KW-0677">Repeat</keyword>
<keyword id="KW-1278">Translocase</keyword>
<keyword id="KW-0813">Transport</keyword>
<protein>
    <recommendedName>
        <fullName evidence="1">Ion-translocating oxidoreductase complex subunit B</fullName>
        <ecNumber evidence="1">7.-.-.-</ecNumber>
    </recommendedName>
    <alternativeName>
        <fullName evidence="1">Rnf electron transport complex subunit B</fullName>
    </alternativeName>
</protein>
<gene>
    <name evidence="1" type="primary">rnfB</name>
    <name type="ordered locus">Mlg_0815</name>
</gene>
<accession>Q0AAG8</accession>
<reference key="1">
    <citation type="submission" date="2006-08" db="EMBL/GenBank/DDBJ databases">
        <title>Complete sequence of Alkalilimnicola ehrilichei MLHE-1.</title>
        <authorList>
            <person name="Copeland A."/>
            <person name="Lucas S."/>
            <person name="Lapidus A."/>
            <person name="Barry K."/>
            <person name="Detter J.C."/>
            <person name="Glavina del Rio T."/>
            <person name="Hammon N."/>
            <person name="Israni S."/>
            <person name="Dalin E."/>
            <person name="Tice H."/>
            <person name="Pitluck S."/>
            <person name="Sims D."/>
            <person name="Brettin T."/>
            <person name="Bruce D."/>
            <person name="Han C."/>
            <person name="Tapia R."/>
            <person name="Gilna P."/>
            <person name="Schmutz J."/>
            <person name="Larimer F."/>
            <person name="Land M."/>
            <person name="Hauser L."/>
            <person name="Kyrpides N."/>
            <person name="Mikhailova N."/>
            <person name="Oremland R.S."/>
            <person name="Hoeft S.E."/>
            <person name="Switzer-Blum J."/>
            <person name="Kulp T."/>
            <person name="King G."/>
            <person name="Tabita R."/>
            <person name="Witte B."/>
            <person name="Santini J.M."/>
            <person name="Basu P."/>
            <person name="Hollibaugh J.T."/>
            <person name="Xie G."/>
            <person name="Stolz J.F."/>
            <person name="Richardson P."/>
        </authorList>
    </citation>
    <scope>NUCLEOTIDE SEQUENCE [LARGE SCALE GENOMIC DNA]</scope>
    <source>
        <strain>ATCC BAA-1101 / DSM 17681 / MLHE-1</strain>
    </source>
</reference>
<sequence>MLTPILALTALALIAGALLGFAAVRFRVEGNPIADQVDAVLPQTQCGQCGFGGCRPYAEAIAAGEAEINRCPPGGQDTVQTLADLLGVEPLPLDEERGEAPHTPQVAWVDEAVCIGCTRCIQACPVDAILGAAKQMHTVLKGECTGCGLCVDPCPVDCIHMVPVDLDLAEWHWPLPQNDTARREVA</sequence>
<evidence type="ECO:0000255" key="1">
    <source>
        <dbReference type="HAMAP-Rule" id="MF_00463"/>
    </source>
</evidence>
<organism>
    <name type="scientific">Alkalilimnicola ehrlichii (strain ATCC BAA-1101 / DSM 17681 / MLHE-1)</name>
    <dbReference type="NCBI Taxonomy" id="187272"/>
    <lineage>
        <taxon>Bacteria</taxon>
        <taxon>Pseudomonadati</taxon>
        <taxon>Pseudomonadota</taxon>
        <taxon>Gammaproteobacteria</taxon>
        <taxon>Chromatiales</taxon>
        <taxon>Ectothiorhodospiraceae</taxon>
        <taxon>Alkalilimnicola</taxon>
    </lineage>
</organism>
<name>RNFB_ALKEH</name>
<comment type="function">
    <text evidence="1">Part of a membrane-bound complex that couples electron transfer with translocation of ions across the membrane.</text>
</comment>
<comment type="cofactor">
    <cofactor evidence="1">
        <name>[4Fe-4S] cluster</name>
        <dbReference type="ChEBI" id="CHEBI:49883"/>
    </cofactor>
    <text evidence="1">Binds 3 [4Fe-4S] clusters.</text>
</comment>
<comment type="subunit">
    <text evidence="1">The complex is composed of six subunits: RnfA, RnfB, RnfC, RnfD, RnfE and RnfG.</text>
</comment>
<comment type="subcellular location">
    <subcellularLocation>
        <location evidence="1">Cell inner membrane</location>
    </subcellularLocation>
</comment>
<comment type="similarity">
    <text evidence="1">Belongs to the 4Fe4S bacterial-type ferredoxin family. RnfB subfamily.</text>
</comment>
<feature type="chain" id="PRO_1000013636" description="Ion-translocating oxidoreductase complex subunit B">
    <location>
        <begin position="1"/>
        <end position="186"/>
    </location>
</feature>
<feature type="domain" description="4Fe-4S" evidence="1">
    <location>
        <begin position="29"/>
        <end position="88"/>
    </location>
</feature>
<feature type="domain" description="4Fe-4S ferredoxin-type 1" evidence="1">
    <location>
        <begin position="105"/>
        <end position="134"/>
    </location>
</feature>
<feature type="domain" description="4Fe-4S ferredoxin-type 2" evidence="1">
    <location>
        <begin position="135"/>
        <end position="164"/>
    </location>
</feature>
<feature type="region of interest" description="Hydrophobic" evidence="1">
    <location>
        <begin position="1"/>
        <end position="23"/>
    </location>
</feature>
<feature type="binding site" evidence="1">
    <location>
        <position position="46"/>
    </location>
    <ligand>
        <name>[4Fe-4S] cluster</name>
        <dbReference type="ChEBI" id="CHEBI:49883"/>
        <label>1</label>
    </ligand>
</feature>
<feature type="binding site" evidence="1">
    <location>
        <position position="49"/>
    </location>
    <ligand>
        <name>[4Fe-4S] cluster</name>
        <dbReference type="ChEBI" id="CHEBI:49883"/>
        <label>1</label>
    </ligand>
</feature>
<feature type="binding site" evidence="1">
    <location>
        <position position="54"/>
    </location>
    <ligand>
        <name>[4Fe-4S] cluster</name>
        <dbReference type="ChEBI" id="CHEBI:49883"/>
        <label>1</label>
    </ligand>
</feature>
<feature type="binding site" evidence="1">
    <location>
        <position position="71"/>
    </location>
    <ligand>
        <name>[4Fe-4S] cluster</name>
        <dbReference type="ChEBI" id="CHEBI:49883"/>
        <label>1</label>
    </ligand>
</feature>
<feature type="binding site" evidence="1">
    <location>
        <position position="114"/>
    </location>
    <ligand>
        <name>[4Fe-4S] cluster</name>
        <dbReference type="ChEBI" id="CHEBI:49883"/>
        <label>2</label>
    </ligand>
</feature>
<feature type="binding site" evidence="1">
    <location>
        <position position="117"/>
    </location>
    <ligand>
        <name>[4Fe-4S] cluster</name>
        <dbReference type="ChEBI" id="CHEBI:49883"/>
        <label>2</label>
    </ligand>
</feature>
<feature type="binding site" evidence="1">
    <location>
        <position position="120"/>
    </location>
    <ligand>
        <name>[4Fe-4S] cluster</name>
        <dbReference type="ChEBI" id="CHEBI:49883"/>
        <label>2</label>
    </ligand>
</feature>
<feature type="binding site" evidence="1">
    <location>
        <position position="124"/>
    </location>
    <ligand>
        <name>[4Fe-4S] cluster</name>
        <dbReference type="ChEBI" id="CHEBI:49883"/>
        <label>3</label>
    </ligand>
</feature>
<feature type="binding site" evidence="1">
    <location>
        <position position="144"/>
    </location>
    <ligand>
        <name>[4Fe-4S] cluster</name>
        <dbReference type="ChEBI" id="CHEBI:49883"/>
        <label>3</label>
    </ligand>
</feature>
<feature type="binding site" evidence="1">
    <location>
        <position position="147"/>
    </location>
    <ligand>
        <name>[4Fe-4S] cluster</name>
        <dbReference type="ChEBI" id="CHEBI:49883"/>
        <label>3</label>
    </ligand>
</feature>
<feature type="binding site" evidence="1">
    <location>
        <position position="150"/>
    </location>
    <ligand>
        <name>[4Fe-4S] cluster</name>
        <dbReference type="ChEBI" id="CHEBI:49883"/>
        <label>3</label>
    </ligand>
</feature>
<feature type="binding site" evidence="1">
    <location>
        <position position="154"/>
    </location>
    <ligand>
        <name>[4Fe-4S] cluster</name>
        <dbReference type="ChEBI" id="CHEBI:49883"/>
        <label>2</label>
    </ligand>
</feature>
<proteinExistence type="inferred from homology"/>
<dbReference type="EC" id="7.-.-.-" evidence="1"/>
<dbReference type="EMBL" id="CP000453">
    <property type="protein sequence ID" value="ABI56169.1"/>
    <property type="molecule type" value="Genomic_DNA"/>
</dbReference>
<dbReference type="RefSeq" id="WP_011628564.1">
    <property type="nucleotide sequence ID" value="NC_008340.1"/>
</dbReference>
<dbReference type="KEGG" id="aeh:Mlg_0815"/>
<dbReference type="eggNOG" id="COG2878">
    <property type="taxonomic scope" value="Bacteria"/>
</dbReference>
<dbReference type="HOGENOM" id="CLU_063448_2_0_6"/>
<dbReference type="OrthoDB" id="9789936at2"/>
<dbReference type="Proteomes" id="UP000001962">
    <property type="component" value="Chromosome"/>
</dbReference>
<dbReference type="GO" id="GO:0005886">
    <property type="term" value="C:plasma membrane"/>
    <property type="evidence" value="ECO:0007669"/>
    <property type="project" value="UniProtKB-SubCell"/>
</dbReference>
<dbReference type="GO" id="GO:0051539">
    <property type="term" value="F:4 iron, 4 sulfur cluster binding"/>
    <property type="evidence" value="ECO:0007669"/>
    <property type="project" value="UniProtKB-UniRule"/>
</dbReference>
<dbReference type="GO" id="GO:0009055">
    <property type="term" value="F:electron transfer activity"/>
    <property type="evidence" value="ECO:0007669"/>
    <property type="project" value="InterPro"/>
</dbReference>
<dbReference type="GO" id="GO:0046872">
    <property type="term" value="F:metal ion binding"/>
    <property type="evidence" value="ECO:0007669"/>
    <property type="project" value="UniProtKB-KW"/>
</dbReference>
<dbReference type="GO" id="GO:0022900">
    <property type="term" value="P:electron transport chain"/>
    <property type="evidence" value="ECO:0007669"/>
    <property type="project" value="UniProtKB-UniRule"/>
</dbReference>
<dbReference type="FunFam" id="1.10.15.40:FF:000001">
    <property type="entry name" value="Ion-translocating oxidoreductase complex subunit B"/>
    <property type="match status" value="1"/>
</dbReference>
<dbReference type="Gene3D" id="3.30.70.20">
    <property type="match status" value="1"/>
</dbReference>
<dbReference type="Gene3D" id="1.10.15.40">
    <property type="entry name" value="Electron transport complex subunit B, putative Fe-S cluster"/>
    <property type="match status" value="1"/>
</dbReference>
<dbReference type="HAMAP" id="MF_00463">
    <property type="entry name" value="RsxB_RnfB"/>
    <property type="match status" value="1"/>
</dbReference>
<dbReference type="InterPro" id="IPR007202">
    <property type="entry name" value="4Fe-4S_dom"/>
</dbReference>
<dbReference type="InterPro" id="IPR017896">
    <property type="entry name" value="4Fe4S_Fe-S-bd"/>
</dbReference>
<dbReference type="InterPro" id="IPR017900">
    <property type="entry name" value="4Fe4S_Fe_S_CS"/>
</dbReference>
<dbReference type="InterPro" id="IPR010207">
    <property type="entry name" value="Elect_transpt_cplx_RnfB/RsxB"/>
</dbReference>
<dbReference type="InterPro" id="IPR016463">
    <property type="entry name" value="RnfB/RsxB_Proteobac"/>
</dbReference>
<dbReference type="InterPro" id="IPR050294">
    <property type="entry name" value="RnfB_subfamily"/>
</dbReference>
<dbReference type="NCBIfam" id="NF003475">
    <property type="entry name" value="PRK05113.1"/>
    <property type="match status" value="1"/>
</dbReference>
<dbReference type="NCBIfam" id="TIGR01944">
    <property type="entry name" value="rnfB"/>
    <property type="match status" value="1"/>
</dbReference>
<dbReference type="PANTHER" id="PTHR42859:SF3">
    <property type="entry name" value="ION-TRANSLOCATING OXIDOREDUCTASE COMPLEX SUBUNIT B"/>
    <property type="match status" value="1"/>
</dbReference>
<dbReference type="PANTHER" id="PTHR42859">
    <property type="entry name" value="OXIDOREDUCTASE"/>
    <property type="match status" value="1"/>
</dbReference>
<dbReference type="Pfam" id="PF14697">
    <property type="entry name" value="Fer4_21"/>
    <property type="match status" value="1"/>
</dbReference>
<dbReference type="Pfam" id="PF04060">
    <property type="entry name" value="FeS"/>
    <property type="match status" value="1"/>
</dbReference>
<dbReference type="PIRSF" id="PIRSF005784">
    <property type="entry name" value="Elect_transpt_RnfB"/>
    <property type="match status" value="1"/>
</dbReference>
<dbReference type="SUPFAM" id="SSF54862">
    <property type="entry name" value="4Fe-4S ferredoxins"/>
    <property type="match status" value="1"/>
</dbReference>
<dbReference type="PROSITE" id="PS51656">
    <property type="entry name" value="4FE4S"/>
    <property type="match status" value="1"/>
</dbReference>
<dbReference type="PROSITE" id="PS00198">
    <property type="entry name" value="4FE4S_FER_1"/>
    <property type="match status" value="2"/>
</dbReference>
<dbReference type="PROSITE" id="PS51379">
    <property type="entry name" value="4FE4S_FER_2"/>
    <property type="match status" value="2"/>
</dbReference>